<gene>
    <name evidence="1" type="primary">rph</name>
    <name type="ordered locus">Ava_2671</name>
</gene>
<evidence type="ECO:0000255" key="1">
    <source>
        <dbReference type="HAMAP-Rule" id="MF_00564"/>
    </source>
</evidence>
<sequence>MVWQRPDGRKPYELRPINFHTKFTRFAPGSVLTICGETKVLCTVSVAESVPKFLAGSGKGWLTAEYRMLPSATQQRHERELLKLSGRTQEIQRLIGRSLRAAIDFEALGERTLTVDADVLQADAGTRTAAITGGFVALAEAISQLLQRGVLERSPLCGQVAAVSVGLLEQEAYLDLNYIEDVAATVDFNVVMNKNLGIIEVQGTAEEGSFSRTQLNQLLDCAETGIQQLLIAQQKAITDWDELFVGK</sequence>
<proteinExistence type="inferred from homology"/>
<comment type="function">
    <text evidence="1">Phosphorolytic 3'-5' exoribonuclease that plays an important role in tRNA 3'-end maturation. Removes nucleotide residues following the 3'-CCA terminus of tRNAs; can also add nucleotides to the ends of RNA molecules by using nucleoside diphosphates as substrates, but this may not be physiologically important. Probably plays a role in initiation of 16S rRNA degradation (leading to ribosome degradation) during starvation.</text>
</comment>
<comment type="catalytic activity">
    <reaction evidence="1">
        <text>tRNA(n+1) + phosphate = tRNA(n) + a ribonucleoside 5'-diphosphate</text>
        <dbReference type="Rhea" id="RHEA:10628"/>
        <dbReference type="Rhea" id="RHEA-COMP:17343"/>
        <dbReference type="Rhea" id="RHEA-COMP:17344"/>
        <dbReference type="ChEBI" id="CHEBI:43474"/>
        <dbReference type="ChEBI" id="CHEBI:57930"/>
        <dbReference type="ChEBI" id="CHEBI:173114"/>
        <dbReference type="EC" id="2.7.7.56"/>
    </reaction>
</comment>
<comment type="subunit">
    <text evidence="1">Homohexameric ring arranged as a trimer of dimers.</text>
</comment>
<comment type="similarity">
    <text evidence="1">Belongs to the RNase PH family.</text>
</comment>
<reference key="1">
    <citation type="journal article" date="2014" name="Stand. Genomic Sci.">
        <title>Complete genome sequence of Anabaena variabilis ATCC 29413.</title>
        <authorList>
            <person name="Thiel T."/>
            <person name="Pratte B.S."/>
            <person name="Zhong J."/>
            <person name="Goodwin L."/>
            <person name="Copeland A."/>
            <person name="Lucas S."/>
            <person name="Han C."/>
            <person name="Pitluck S."/>
            <person name="Land M.L."/>
            <person name="Kyrpides N.C."/>
            <person name="Woyke T."/>
        </authorList>
    </citation>
    <scope>NUCLEOTIDE SEQUENCE [LARGE SCALE GENOMIC DNA]</scope>
    <source>
        <strain>ATCC 29413 / PCC 7937</strain>
    </source>
</reference>
<organism>
    <name type="scientific">Trichormus variabilis (strain ATCC 29413 / PCC 7937)</name>
    <name type="common">Anabaena variabilis</name>
    <dbReference type="NCBI Taxonomy" id="240292"/>
    <lineage>
        <taxon>Bacteria</taxon>
        <taxon>Bacillati</taxon>
        <taxon>Cyanobacteriota</taxon>
        <taxon>Cyanophyceae</taxon>
        <taxon>Nostocales</taxon>
        <taxon>Nostocaceae</taxon>
        <taxon>Trichormus</taxon>
    </lineage>
</organism>
<feature type="chain" id="PRO_1000024773" description="Ribonuclease PH">
    <location>
        <begin position="1"/>
        <end position="247"/>
    </location>
</feature>
<feature type="binding site" evidence="1">
    <location>
        <position position="87"/>
    </location>
    <ligand>
        <name>phosphate</name>
        <dbReference type="ChEBI" id="CHEBI:43474"/>
        <note>substrate</note>
    </ligand>
</feature>
<feature type="binding site" evidence="1">
    <location>
        <begin position="125"/>
        <end position="127"/>
    </location>
    <ligand>
        <name>phosphate</name>
        <dbReference type="ChEBI" id="CHEBI:43474"/>
        <note>substrate</note>
    </ligand>
</feature>
<name>RNPH_TRIV2</name>
<dbReference type="EC" id="2.7.7.56" evidence="1"/>
<dbReference type="EMBL" id="CP000117">
    <property type="protein sequence ID" value="ABA22284.1"/>
    <property type="molecule type" value="Genomic_DNA"/>
</dbReference>
<dbReference type="SMR" id="Q3M9Q2"/>
<dbReference type="STRING" id="240292.Ava_2671"/>
<dbReference type="KEGG" id="ava:Ava_2671"/>
<dbReference type="eggNOG" id="COG0689">
    <property type="taxonomic scope" value="Bacteria"/>
</dbReference>
<dbReference type="HOGENOM" id="CLU_050858_0_0_3"/>
<dbReference type="Proteomes" id="UP000002533">
    <property type="component" value="Chromosome"/>
</dbReference>
<dbReference type="GO" id="GO:0000175">
    <property type="term" value="F:3'-5'-RNA exonuclease activity"/>
    <property type="evidence" value="ECO:0007669"/>
    <property type="project" value="UniProtKB-UniRule"/>
</dbReference>
<dbReference type="GO" id="GO:0000049">
    <property type="term" value="F:tRNA binding"/>
    <property type="evidence" value="ECO:0007669"/>
    <property type="project" value="UniProtKB-UniRule"/>
</dbReference>
<dbReference type="GO" id="GO:0009022">
    <property type="term" value="F:tRNA nucleotidyltransferase activity"/>
    <property type="evidence" value="ECO:0007669"/>
    <property type="project" value="UniProtKB-UniRule"/>
</dbReference>
<dbReference type="GO" id="GO:0016075">
    <property type="term" value="P:rRNA catabolic process"/>
    <property type="evidence" value="ECO:0007669"/>
    <property type="project" value="UniProtKB-UniRule"/>
</dbReference>
<dbReference type="GO" id="GO:0006364">
    <property type="term" value="P:rRNA processing"/>
    <property type="evidence" value="ECO:0007669"/>
    <property type="project" value="UniProtKB-KW"/>
</dbReference>
<dbReference type="GO" id="GO:0008033">
    <property type="term" value="P:tRNA processing"/>
    <property type="evidence" value="ECO:0007669"/>
    <property type="project" value="UniProtKB-UniRule"/>
</dbReference>
<dbReference type="CDD" id="cd11362">
    <property type="entry name" value="RNase_PH_bact"/>
    <property type="match status" value="1"/>
</dbReference>
<dbReference type="FunFam" id="3.30.230.70:FF:000003">
    <property type="entry name" value="Ribonuclease PH"/>
    <property type="match status" value="1"/>
</dbReference>
<dbReference type="Gene3D" id="3.30.230.70">
    <property type="entry name" value="GHMP Kinase, N-terminal domain"/>
    <property type="match status" value="1"/>
</dbReference>
<dbReference type="HAMAP" id="MF_00564">
    <property type="entry name" value="RNase_PH"/>
    <property type="match status" value="1"/>
</dbReference>
<dbReference type="InterPro" id="IPR001247">
    <property type="entry name" value="ExoRNase_PH_dom1"/>
</dbReference>
<dbReference type="InterPro" id="IPR015847">
    <property type="entry name" value="ExoRNase_PH_dom2"/>
</dbReference>
<dbReference type="InterPro" id="IPR036345">
    <property type="entry name" value="ExoRNase_PH_dom2_sf"/>
</dbReference>
<dbReference type="InterPro" id="IPR027408">
    <property type="entry name" value="PNPase/RNase_PH_dom_sf"/>
</dbReference>
<dbReference type="InterPro" id="IPR020568">
    <property type="entry name" value="Ribosomal_Su5_D2-typ_SF"/>
</dbReference>
<dbReference type="InterPro" id="IPR050080">
    <property type="entry name" value="RNase_PH"/>
</dbReference>
<dbReference type="InterPro" id="IPR002381">
    <property type="entry name" value="RNase_PH_bac-type"/>
</dbReference>
<dbReference type="InterPro" id="IPR018336">
    <property type="entry name" value="RNase_PH_CS"/>
</dbReference>
<dbReference type="NCBIfam" id="TIGR01966">
    <property type="entry name" value="RNasePH"/>
    <property type="match status" value="1"/>
</dbReference>
<dbReference type="PANTHER" id="PTHR11953">
    <property type="entry name" value="EXOSOME COMPLEX COMPONENT"/>
    <property type="match status" value="1"/>
</dbReference>
<dbReference type="PANTHER" id="PTHR11953:SF0">
    <property type="entry name" value="EXOSOME COMPLEX COMPONENT RRP41"/>
    <property type="match status" value="1"/>
</dbReference>
<dbReference type="Pfam" id="PF01138">
    <property type="entry name" value="RNase_PH"/>
    <property type="match status" value="1"/>
</dbReference>
<dbReference type="Pfam" id="PF03725">
    <property type="entry name" value="RNase_PH_C"/>
    <property type="match status" value="1"/>
</dbReference>
<dbReference type="SUPFAM" id="SSF55666">
    <property type="entry name" value="Ribonuclease PH domain 2-like"/>
    <property type="match status" value="1"/>
</dbReference>
<dbReference type="SUPFAM" id="SSF54211">
    <property type="entry name" value="Ribosomal protein S5 domain 2-like"/>
    <property type="match status" value="1"/>
</dbReference>
<dbReference type="PROSITE" id="PS01277">
    <property type="entry name" value="RIBONUCLEASE_PH"/>
    <property type="match status" value="1"/>
</dbReference>
<keyword id="KW-0548">Nucleotidyltransferase</keyword>
<keyword id="KW-0694">RNA-binding</keyword>
<keyword id="KW-0698">rRNA processing</keyword>
<keyword id="KW-0808">Transferase</keyword>
<keyword id="KW-0819">tRNA processing</keyword>
<keyword id="KW-0820">tRNA-binding</keyword>
<accession>Q3M9Q2</accession>
<protein>
    <recommendedName>
        <fullName evidence="1">Ribonuclease PH</fullName>
        <shortName evidence="1">RNase PH</shortName>
        <ecNumber evidence="1">2.7.7.56</ecNumber>
    </recommendedName>
    <alternativeName>
        <fullName evidence="1">tRNA nucleotidyltransferase</fullName>
    </alternativeName>
</protein>